<protein>
    <recommendedName>
        <fullName evidence="1">Cobalt transport protein CbiM</fullName>
    </recommendedName>
    <alternativeName>
        <fullName evidence="1">Energy-coupling factor transporter probable substrate-capture protein CbiM</fullName>
        <shortName evidence="1">ECF transporter S component CbiM</shortName>
    </alternativeName>
</protein>
<reference key="1">
    <citation type="journal article" date="2003" name="Science">
        <title>Genome of Geobacter sulfurreducens: metal reduction in subsurface environments.</title>
        <authorList>
            <person name="Methe B.A."/>
            <person name="Nelson K.E."/>
            <person name="Eisen J.A."/>
            <person name="Paulsen I.T."/>
            <person name="Nelson W.C."/>
            <person name="Heidelberg J.F."/>
            <person name="Wu D."/>
            <person name="Wu M."/>
            <person name="Ward N.L."/>
            <person name="Beanan M.J."/>
            <person name="Dodson R.J."/>
            <person name="Madupu R."/>
            <person name="Brinkac L.M."/>
            <person name="Daugherty S.C."/>
            <person name="DeBoy R.T."/>
            <person name="Durkin A.S."/>
            <person name="Gwinn M.L."/>
            <person name="Kolonay J.F."/>
            <person name="Sullivan S.A."/>
            <person name="Haft D.H."/>
            <person name="Selengut J."/>
            <person name="Davidsen T.M."/>
            <person name="Zafar N."/>
            <person name="White O."/>
            <person name="Tran B."/>
            <person name="Romero C."/>
            <person name="Forberger H.A."/>
            <person name="Weidman J.F."/>
            <person name="Khouri H.M."/>
            <person name="Feldblyum T.V."/>
            <person name="Utterback T.R."/>
            <person name="Van Aken S.E."/>
            <person name="Lovley D.R."/>
            <person name="Fraser C.M."/>
        </authorList>
    </citation>
    <scope>NUCLEOTIDE SEQUENCE [LARGE SCALE GENOMIC DNA]</scope>
    <source>
        <strain>ATCC 51573 / DSM 12127 / PCA</strain>
    </source>
</reference>
<dbReference type="EMBL" id="AE017180">
    <property type="protein sequence ID" value="AAR36396.1"/>
    <property type="molecule type" value="Genomic_DNA"/>
</dbReference>
<dbReference type="RefSeq" id="NP_954046.3">
    <property type="nucleotide sequence ID" value="NC_002939.5"/>
</dbReference>
<dbReference type="RefSeq" id="WP_010943634.1">
    <property type="nucleotide sequence ID" value="NC_002939.5"/>
</dbReference>
<dbReference type="SMR" id="Q748J7"/>
<dbReference type="STRING" id="243231.GSU3004"/>
<dbReference type="EnsemblBacteria" id="AAR36396">
    <property type="protein sequence ID" value="AAR36396"/>
    <property type="gene ID" value="GSU3004"/>
</dbReference>
<dbReference type="KEGG" id="gsu:GSU3004"/>
<dbReference type="PATRIC" id="fig|243231.5.peg.3031"/>
<dbReference type="eggNOG" id="COG0310">
    <property type="taxonomic scope" value="Bacteria"/>
</dbReference>
<dbReference type="HOGENOM" id="CLU_052508_3_1_7"/>
<dbReference type="InParanoid" id="Q748J7"/>
<dbReference type="OrthoDB" id="9809846at2"/>
<dbReference type="UniPathway" id="UPA00148"/>
<dbReference type="Proteomes" id="UP000000577">
    <property type="component" value="Chromosome"/>
</dbReference>
<dbReference type="GO" id="GO:0043190">
    <property type="term" value="C:ATP-binding cassette (ABC) transporter complex"/>
    <property type="evidence" value="ECO:0007669"/>
    <property type="project" value="InterPro"/>
</dbReference>
<dbReference type="GO" id="GO:0015087">
    <property type="term" value="F:cobalt ion transmembrane transporter activity"/>
    <property type="evidence" value="ECO:0007669"/>
    <property type="project" value="UniProtKB-UniRule"/>
</dbReference>
<dbReference type="GO" id="GO:0009236">
    <property type="term" value="P:cobalamin biosynthetic process"/>
    <property type="evidence" value="ECO:0007669"/>
    <property type="project" value="UniProtKB-UniRule"/>
</dbReference>
<dbReference type="Gene3D" id="1.10.1760.20">
    <property type="match status" value="1"/>
</dbReference>
<dbReference type="HAMAP" id="MF_01462">
    <property type="entry name" value="CbiM"/>
    <property type="match status" value="1"/>
</dbReference>
<dbReference type="InterPro" id="IPR018024">
    <property type="entry name" value="CbiM"/>
</dbReference>
<dbReference type="InterPro" id="IPR002751">
    <property type="entry name" value="CbiM/NikMN"/>
</dbReference>
<dbReference type="NCBIfam" id="NF006184">
    <property type="entry name" value="PRK08319.1"/>
    <property type="match status" value="1"/>
</dbReference>
<dbReference type="PANTHER" id="PTHR43627">
    <property type="match status" value="1"/>
</dbReference>
<dbReference type="PANTHER" id="PTHR43627:SF1">
    <property type="entry name" value="COBALT TRANSPORT PROTEIN CBIM"/>
    <property type="match status" value="1"/>
</dbReference>
<dbReference type="Pfam" id="PF01891">
    <property type="entry name" value="CbiM"/>
    <property type="match status" value="1"/>
</dbReference>
<accession>Q748J7</accession>
<proteinExistence type="inferred from homology"/>
<name>CBIM_GEOSL</name>
<sequence>MKRITLYAAGSAIIGAMLLAGPAHAMHISEGILPLGWAALWFAVAAPFLALGIRRVNELSRHDLSFKPLVGLMAAVVFIISCMPIPVPTAGTCSHPCGTGIAAILVGPLVSVVITTVALLIQALFLAHGGLSTLGADVVSMGVAGSFAGWFVFRGMRRLGAGLAVAAFVAGLLADWATYLTTALELSSGVRGSEPFYPLFLKIVAAFVPTQLPLGVLEGAMTAGMVVLLHRKRPDLLAKMGVVDAGGPGAGPRRATVVMLALFCLLASLLVAGPSRASEKWPGVDETVVEKIAAEHGREPRDPLINTDQGDLLLFVFLLAGTVGGFAAGYFWRMLVAERRTYDDHT</sequence>
<feature type="signal peptide" evidence="1">
    <location>
        <begin position="1"/>
        <end position="25"/>
    </location>
</feature>
<feature type="chain" id="PRO_0000411141" description="Cobalt transport protein CbiM">
    <location>
        <begin position="26"/>
        <end position="346"/>
    </location>
</feature>
<feature type="transmembrane region" description="Helical" evidence="1">
    <location>
        <begin position="31"/>
        <end position="51"/>
    </location>
</feature>
<feature type="transmembrane region" description="Helical" evidence="1">
    <location>
        <begin position="68"/>
        <end position="88"/>
    </location>
</feature>
<feature type="transmembrane region" description="Helical" evidence="1">
    <location>
        <begin position="101"/>
        <end position="121"/>
    </location>
</feature>
<feature type="transmembrane region" description="Helical" evidence="1">
    <location>
        <begin position="133"/>
        <end position="153"/>
    </location>
</feature>
<feature type="transmembrane region" description="Helical" evidence="1">
    <location>
        <begin position="159"/>
        <end position="179"/>
    </location>
</feature>
<feature type="transmembrane region" description="Helical" evidence="1">
    <location>
        <begin position="196"/>
        <end position="216"/>
    </location>
</feature>
<feature type="transmembrane region" description="Helical" evidence="1">
    <location>
        <begin position="255"/>
        <end position="275"/>
    </location>
</feature>
<feature type="transmembrane region" description="Helical" evidence="1">
    <location>
        <begin position="312"/>
        <end position="332"/>
    </location>
</feature>
<organism>
    <name type="scientific">Geobacter sulfurreducens (strain ATCC 51573 / DSM 12127 / PCA)</name>
    <dbReference type="NCBI Taxonomy" id="243231"/>
    <lineage>
        <taxon>Bacteria</taxon>
        <taxon>Pseudomonadati</taxon>
        <taxon>Thermodesulfobacteriota</taxon>
        <taxon>Desulfuromonadia</taxon>
        <taxon>Geobacterales</taxon>
        <taxon>Geobacteraceae</taxon>
        <taxon>Geobacter</taxon>
    </lineage>
</organism>
<comment type="function">
    <text evidence="1">Part of the energy-coupling factor (ECF) transporter complex CbiMNOQ involved in cobalt import.</text>
</comment>
<comment type="pathway">
    <text evidence="1">Cofactor biosynthesis; adenosylcobalamin biosynthesis.</text>
</comment>
<comment type="subunit">
    <text evidence="1">Forms an energy-coupling factor (ECF) transporter complex composed of an ATP-binding protein (A component, CbiO), a transmembrane protein (T component, CbiQ) and 2 possible substrate-capture proteins (S components, CbiM and CbiN) of unknown stoichimetry.</text>
</comment>
<comment type="subcellular location">
    <subcellularLocation>
        <location evidence="1">Cell inner membrane</location>
        <topology evidence="1">Multi-pass membrane protein</topology>
    </subcellularLocation>
</comment>
<comment type="similarity">
    <text evidence="1">Belongs to the CbiM family.</text>
</comment>
<gene>
    <name evidence="1" type="primary">cbiM</name>
    <name type="ordered locus">GSU3004</name>
</gene>
<evidence type="ECO:0000255" key="1">
    <source>
        <dbReference type="HAMAP-Rule" id="MF_01462"/>
    </source>
</evidence>
<keyword id="KW-0997">Cell inner membrane</keyword>
<keyword id="KW-1003">Cell membrane</keyword>
<keyword id="KW-0169">Cobalamin biosynthesis</keyword>
<keyword id="KW-0170">Cobalt</keyword>
<keyword id="KW-0171">Cobalt transport</keyword>
<keyword id="KW-0406">Ion transport</keyword>
<keyword id="KW-0472">Membrane</keyword>
<keyword id="KW-1185">Reference proteome</keyword>
<keyword id="KW-0732">Signal</keyword>
<keyword id="KW-0812">Transmembrane</keyword>
<keyword id="KW-1133">Transmembrane helix</keyword>
<keyword id="KW-0813">Transport</keyword>